<proteinExistence type="inferred from homology"/>
<protein>
    <recommendedName>
        <fullName evidence="1">3-dehydroquinate synthase</fullName>
        <shortName evidence="1">DHQS</shortName>
        <ecNumber evidence="1">4.2.3.4</ecNumber>
    </recommendedName>
</protein>
<accession>A9M9B3</accession>
<evidence type="ECO:0000255" key="1">
    <source>
        <dbReference type="HAMAP-Rule" id="MF_00110"/>
    </source>
</evidence>
<feature type="chain" id="PRO_1000094464" description="3-dehydroquinate synthase">
    <location>
        <begin position="1"/>
        <end position="378"/>
    </location>
</feature>
<feature type="binding site" evidence="1">
    <location>
        <begin position="115"/>
        <end position="119"/>
    </location>
    <ligand>
        <name>NAD(+)</name>
        <dbReference type="ChEBI" id="CHEBI:57540"/>
    </ligand>
</feature>
<feature type="binding site" evidence="1">
    <location>
        <begin position="139"/>
        <end position="140"/>
    </location>
    <ligand>
        <name>NAD(+)</name>
        <dbReference type="ChEBI" id="CHEBI:57540"/>
    </ligand>
</feature>
<feature type="binding site" evidence="1">
    <location>
        <position position="152"/>
    </location>
    <ligand>
        <name>NAD(+)</name>
        <dbReference type="ChEBI" id="CHEBI:57540"/>
    </ligand>
</feature>
<feature type="binding site" evidence="1">
    <location>
        <position position="161"/>
    </location>
    <ligand>
        <name>NAD(+)</name>
        <dbReference type="ChEBI" id="CHEBI:57540"/>
    </ligand>
</feature>
<feature type="binding site" evidence="1">
    <location>
        <position position="194"/>
    </location>
    <ligand>
        <name>Zn(2+)</name>
        <dbReference type="ChEBI" id="CHEBI:29105"/>
    </ligand>
</feature>
<feature type="binding site" evidence="1">
    <location>
        <position position="256"/>
    </location>
    <ligand>
        <name>Zn(2+)</name>
        <dbReference type="ChEBI" id="CHEBI:29105"/>
    </ligand>
</feature>
<feature type="binding site" evidence="1">
    <location>
        <position position="275"/>
    </location>
    <ligand>
        <name>Zn(2+)</name>
        <dbReference type="ChEBI" id="CHEBI:29105"/>
    </ligand>
</feature>
<keyword id="KW-0028">Amino-acid biosynthesis</keyword>
<keyword id="KW-0057">Aromatic amino acid biosynthesis</keyword>
<keyword id="KW-0170">Cobalt</keyword>
<keyword id="KW-0963">Cytoplasm</keyword>
<keyword id="KW-0456">Lyase</keyword>
<keyword id="KW-0479">Metal-binding</keyword>
<keyword id="KW-0520">NAD</keyword>
<keyword id="KW-0547">Nucleotide-binding</keyword>
<keyword id="KW-1185">Reference proteome</keyword>
<keyword id="KW-0862">Zinc</keyword>
<comment type="function">
    <text evidence="1">Catalyzes the conversion of 3-deoxy-D-arabino-heptulosonate 7-phosphate (DAHP) to dehydroquinate (DHQ).</text>
</comment>
<comment type="catalytic activity">
    <reaction evidence="1">
        <text>7-phospho-2-dehydro-3-deoxy-D-arabino-heptonate = 3-dehydroquinate + phosphate</text>
        <dbReference type="Rhea" id="RHEA:21968"/>
        <dbReference type="ChEBI" id="CHEBI:32364"/>
        <dbReference type="ChEBI" id="CHEBI:43474"/>
        <dbReference type="ChEBI" id="CHEBI:58394"/>
        <dbReference type="EC" id="4.2.3.4"/>
    </reaction>
</comment>
<comment type="cofactor">
    <cofactor evidence="1">
        <name>Co(2+)</name>
        <dbReference type="ChEBI" id="CHEBI:48828"/>
    </cofactor>
    <cofactor evidence="1">
        <name>Zn(2+)</name>
        <dbReference type="ChEBI" id="CHEBI:29105"/>
    </cofactor>
    <text evidence="1">Binds 1 divalent metal cation per subunit. Can use either Co(2+) or Zn(2+).</text>
</comment>
<comment type="cofactor">
    <cofactor evidence="1">
        <name>NAD(+)</name>
        <dbReference type="ChEBI" id="CHEBI:57540"/>
    </cofactor>
</comment>
<comment type="pathway">
    <text evidence="1">Metabolic intermediate biosynthesis; chorismate biosynthesis; chorismate from D-erythrose 4-phosphate and phosphoenolpyruvate: step 2/7.</text>
</comment>
<comment type="subcellular location">
    <subcellularLocation>
        <location evidence="1">Cytoplasm</location>
    </subcellularLocation>
</comment>
<comment type="similarity">
    <text evidence="1">Belongs to the sugar phosphate cyclases superfamily. Dehydroquinate synthase family.</text>
</comment>
<gene>
    <name evidence="1" type="primary">aroB</name>
    <name type="ordered locus">BCAN_A2074</name>
</gene>
<sequence length="378" mass="39839">MNAPTTVADSVTVPVSLGDRSYDILIGKGLVERAGEEVAKRLKGVRVAIVTDENVAAVHLERLQASFARAGIDSTPVIVAPGEKSKSFATLETVTNAILAAKLERGDAVVALGGGVVGDLSGFVAGIVRRGMNFVQMPTSLLAQVDSSVGGKTGINTAHGKNLVGVFNQPQLVLADTQVLDTLSPREFRAGYAEVAKYGLIDRPDFFAWLEANWQEVFSGGAARTKAIAESCRSKAAVVARDERETGDRALLNLGHTFGHALESATGYDSSRLVHGEGVAIGMALAYRFSARMNLAGIEAAERVEAHLKAVGLPVSLAEVPGGLPPAEKLMDYIAQDKKVTRGTLTFILTHGIGQSFIAKDVPPAAVLEFLKERLAIA</sequence>
<dbReference type="EC" id="4.2.3.4" evidence="1"/>
<dbReference type="EMBL" id="CP000872">
    <property type="protein sequence ID" value="ABX63060.1"/>
    <property type="molecule type" value="Genomic_DNA"/>
</dbReference>
<dbReference type="RefSeq" id="WP_004684507.1">
    <property type="nucleotide sequence ID" value="NC_010103.1"/>
</dbReference>
<dbReference type="SMR" id="A9M9B3"/>
<dbReference type="GeneID" id="97534707"/>
<dbReference type="KEGG" id="bcs:BCAN_A2074"/>
<dbReference type="HOGENOM" id="CLU_001201_0_2_5"/>
<dbReference type="PhylomeDB" id="A9M9B3"/>
<dbReference type="UniPathway" id="UPA00053">
    <property type="reaction ID" value="UER00085"/>
</dbReference>
<dbReference type="Proteomes" id="UP000001385">
    <property type="component" value="Chromosome I"/>
</dbReference>
<dbReference type="GO" id="GO:0005737">
    <property type="term" value="C:cytoplasm"/>
    <property type="evidence" value="ECO:0007669"/>
    <property type="project" value="UniProtKB-SubCell"/>
</dbReference>
<dbReference type="GO" id="GO:0003856">
    <property type="term" value="F:3-dehydroquinate synthase activity"/>
    <property type="evidence" value="ECO:0007669"/>
    <property type="project" value="UniProtKB-UniRule"/>
</dbReference>
<dbReference type="GO" id="GO:0046872">
    <property type="term" value="F:metal ion binding"/>
    <property type="evidence" value="ECO:0007669"/>
    <property type="project" value="UniProtKB-KW"/>
</dbReference>
<dbReference type="GO" id="GO:0000166">
    <property type="term" value="F:nucleotide binding"/>
    <property type="evidence" value="ECO:0007669"/>
    <property type="project" value="UniProtKB-KW"/>
</dbReference>
<dbReference type="GO" id="GO:0008652">
    <property type="term" value="P:amino acid biosynthetic process"/>
    <property type="evidence" value="ECO:0007669"/>
    <property type="project" value="UniProtKB-KW"/>
</dbReference>
<dbReference type="GO" id="GO:0009073">
    <property type="term" value="P:aromatic amino acid family biosynthetic process"/>
    <property type="evidence" value="ECO:0007669"/>
    <property type="project" value="UniProtKB-KW"/>
</dbReference>
<dbReference type="GO" id="GO:0009423">
    <property type="term" value="P:chorismate biosynthetic process"/>
    <property type="evidence" value="ECO:0007669"/>
    <property type="project" value="UniProtKB-UniRule"/>
</dbReference>
<dbReference type="CDD" id="cd08195">
    <property type="entry name" value="DHQS"/>
    <property type="match status" value="1"/>
</dbReference>
<dbReference type="FunFam" id="3.40.50.1970:FF:000007">
    <property type="entry name" value="Pentafunctional AROM polypeptide"/>
    <property type="match status" value="1"/>
</dbReference>
<dbReference type="Gene3D" id="3.40.50.1970">
    <property type="match status" value="1"/>
</dbReference>
<dbReference type="Gene3D" id="1.20.1090.10">
    <property type="entry name" value="Dehydroquinate synthase-like - alpha domain"/>
    <property type="match status" value="1"/>
</dbReference>
<dbReference type="HAMAP" id="MF_00110">
    <property type="entry name" value="DHQ_synthase"/>
    <property type="match status" value="1"/>
</dbReference>
<dbReference type="InterPro" id="IPR050071">
    <property type="entry name" value="Dehydroquinate_synthase"/>
</dbReference>
<dbReference type="InterPro" id="IPR016037">
    <property type="entry name" value="DHQ_synth_AroB"/>
</dbReference>
<dbReference type="InterPro" id="IPR030963">
    <property type="entry name" value="DHQ_synth_fam"/>
</dbReference>
<dbReference type="InterPro" id="IPR030960">
    <property type="entry name" value="DHQS/DOIS_N"/>
</dbReference>
<dbReference type="InterPro" id="IPR056179">
    <property type="entry name" value="DHQS_C"/>
</dbReference>
<dbReference type="NCBIfam" id="TIGR01357">
    <property type="entry name" value="aroB"/>
    <property type="match status" value="1"/>
</dbReference>
<dbReference type="PANTHER" id="PTHR43622">
    <property type="entry name" value="3-DEHYDROQUINATE SYNTHASE"/>
    <property type="match status" value="1"/>
</dbReference>
<dbReference type="PANTHER" id="PTHR43622:SF7">
    <property type="entry name" value="3-DEHYDROQUINATE SYNTHASE, CHLOROPLASTIC"/>
    <property type="match status" value="1"/>
</dbReference>
<dbReference type="Pfam" id="PF01761">
    <property type="entry name" value="DHQ_synthase"/>
    <property type="match status" value="1"/>
</dbReference>
<dbReference type="Pfam" id="PF24621">
    <property type="entry name" value="DHQS_C"/>
    <property type="match status" value="1"/>
</dbReference>
<dbReference type="PIRSF" id="PIRSF001455">
    <property type="entry name" value="DHQ_synth"/>
    <property type="match status" value="1"/>
</dbReference>
<dbReference type="SUPFAM" id="SSF56796">
    <property type="entry name" value="Dehydroquinate synthase-like"/>
    <property type="match status" value="1"/>
</dbReference>
<reference key="1">
    <citation type="submission" date="2007-10" db="EMBL/GenBank/DDBJ databases">
        <title>Brucella canis ATCC 23365 whole genome shotgun sequencing project.</title>
        <authorList>
            <person name="Setubal J.C."/>
            <person name="Bowns C."/>
            <person name="Boyle S."/>
            <person name="Crasta O.R."/>
            <person name="Czar M.J."/>
            <person name="Dharmanolla C."/>
            <person name="Gillespie J.J."/>
            <person name="Kenyon R.W."/>
            <person name="Lu J."/>
            <person name="Mane S."/>
            <person name="Mohapatra S."/>
            <person name="Nagrani S."/>
            <person name="Purkayastha A."/>
            <person name="Rajasimha H.K."/>
            <person name="Shallom J.M."/>
            <person name="Shallom S."/>
            <person name="Shukla M."/>
            <person name="Snyder E.E."/>
            <person name="Sobral B.W."/>
            <person name="Wattam A.R."/>
            <person name="Will R."/>
            <person name="Williams K."/>
            <person name="Yoo H."/>
            <person name="Bruce D."/>
            <person name="Detter C."/>
            <person name="Munk C."/>
            <person name="Brettin T.S."/>
        </authorList>
    </citation>
    <scope>NUCLEOTIDE SEQUENCE [LARGE SCALE GENOMIC DNA]</scope>
    <source>
        <strain>ATCC 23365 / NCTC 10854 / RM-666</strain>
    </source>
</reference>
<organism>
    <name type="scientific">Brucella canis (strain ATCC 23365 / NCTC 10854 / RM-666)</name>
    <dbReference type="NCBI Taxonomy" id="483179"/>
    <lineage>
        <taxon>Bacteria</taxon>
        <taxon>Pseudomonadati</taxon>
        <taxon>Pseudomonadota</taxon>
        <taxon>Alphaproteobacteria</taxon>
        <taxon>Hyphomicrobiales</taxon>
        <taxon>Brucellaceae</taxon>
        <taxon>Brucella/Ochrobactrum group</taxon>
        <taxon>Brucella</taxon>
    </lineage>
</organism>
<name>AROB_BRUC2</name>